<sequence>VYGMLFKFL</sequence>
<dbReference type="GO" id="GO:0005576">
    <property type="term" value="C:extracellular region"/>
    <property type="evidence" value="ECO:0007669"/>
    <property type="project" value="UniProtKB-SubCell"/>
</dbReference>
<dbReference type="GO" id="GO:0090729">
    <property type="term" value="F:toxin activity"/>
    <property type="evidence" value="ECO:0007669"/>
    <property type="project" value="UniProtKB-KW"/>
</dbReference>
<protein>
    <recommendedName>
        <fullName evidence="3">Short cationic peptide-4f</fullName>
        <shortName evidence="3">SCP-4f</shortName>
    </recommendedName>
    <alternativeName>
        <fullName evidence="2">Short cationic peptide-4g</fullName>
        <shortName evidence="2">SCP-4g</shortName>
    </alternativeName>
    <alternativeName>
        <fullName evidence="3">Truncated variant of Cupiennin 4 family</fullName>
    </alternativeName>
</protein>
<evidence type="ECO:0000269" key="1">
    <source>
    </source>
</evidence>
<evidence type="ECO:0000303" key="2">
    <source>
    </source>
</evidence>
<evidence type="ECO:0000303" key="3">
    <source ref="2"/>
</evidence>
<evidence type="ECO:0000305" key="4"/>
<evidence type="ECO:0000305" key="5">
    <source>
    </source>
</evidence>
<keyword id="KW-0903">Direct protein sequencing</keyword>
<keyword id="KW-0964">Secreted</keyword>
<keyword id="KW-0800">Toxin</keyword>
<feature type="peptide" id="PRO_0000421219" description="Short cationic peptide-4f" evidence="1">
    <location>
        <begin position="1"/>
        <end position="9"/>
    </location>
</feature>
<name>TXS4F_CUPSA</name>
<accession>B3EWW2</accession>
<reference key="1">
    <citation type="journal article" date="2012" name="FEBS J.">
        <title>Multicomponent venom of the spider Cupiennius salei: a bioanalytical investigation applying different strategies.</title>
        <authorList>
            <person name="Trachsel C."/>
            <person name="Siegemund D."/>
            <person name="Kampfer U."/>
            <person name="Kopp L.S."/>
            <person name="Buhr C."/>
            <person name="Grossmann J."/>
            <person name="Luthi C."/>
            <person name="Cunningham M."/>
            <person name="Nentwig W."/>
            <person name="Kuhn-Nentwig L."/>
            <person name="Schurch S."/>
            <person name="Schaller J."/>
        </authorList>
    </citation>
    <scope>PROTEIN SEQUENCE</scope>
    <scope>MASS SPECTROMETRY</scope>
    <source>
        <tissue>Venom</tissue>
    </source>
</reference>
<reference key="2">
    <citation type="unpublished observations" date="2015-06">
        <authorList>
            <person name="Kuhn-Nentwig L."/>
            <person name="Gohel T."/>
        </authorList>
    </citation>
    <scope>NOMENCLATURE</scope>
</reference>
<comment type="subcellular location">
    <subcellularLocation>
        <location evidence="1">Secreted</location>
    </subcellularLocation>
</comment>
<comment type="tissue specificity">
    <text evidence="5">Expressed by the venom gland.</text>
</comment>
<comment type="mass spectrometry"/>
<comment type="similarity">
    <text evidence="4">Belongs to the cationic peptide 04 (cupiennin) family. 08 subfamily.</text>
</comment>
<organism>
    <name type="scientific">Cupiennius salei</name>
    <name type="common">American wandering spider</name>
    <dbReference type="NCBI Taxonomy" id="6928"/>
    <lineage>
        <taxon>Eukaryota</taxon>
        <taxon>Metazoa</taxon>
        <taxon>Ecdysozoa</taxon>
        <taxon>Arthropoda</taxon>
        <taxon>Chelicerata</taxon>
        <taxon>Arachnida</taxon>
        <taxon>Araneae</taxon>
        <taxon>Araneomorphae</taxon>
        <taxon>Entelegynae</taxon>
        <taxon>Lycosoidea</taxon>
        <taxon>Ctenidae</taxon>
        <taxon>Cupiennius</taxon>
    </lineage>
</organism>
<proteinExistence type="evidence at protein level"/>